<reference key="1">
    <citation type="journal article" date="1997" name="Nature">
        <title>The complete genome sequence of the gastric pathogen Helicobacter pylori.</title>
        <authorList>
            <person name="Tomb J.-F."/>
            <person name="White O."/>
            <person name="Kerlavage A.R."/>
            <person name="Clayton R.A."/>
            <person name="Sutton G.G."/>
            <person name="Fleischmann R.D."/>
            <person name="Ketchum K.A."/>
            <person name="Klenk H.-P."/>
            <person name="Gill S.R."/>
            <person name="Dougherty B.A."/>
            <person name="Nelson K.E."/>
            <person name="Quackenbush J."/>
            <person name="Zhou L."/>
            <person name="Kirkness E.F."/>
            <person name="Peterson S.N."/>
            <person name="Loftus B.J."/>
            <person name="Richardson D.L."/>
            <person name="Dodson R.J."/>
            <person name="Khalak H.G."/>
            <person name="Glodek A."/>
            <person name="McKenney K."/>
            <person name="FitzGerald L.M."/>
            <person name="Lee N."/>
            <person name="Adams M.D."/>
            <person name="Hickey E.K."/>
            <person name="Berg D.E."/>
            <person name="Gocayne J.D."/>
            <person name="Utterback T.R."/>
            <person name="Peterson J.D."/>
            <person name="Kelley J.M."/>
            <person name="Cotton M.D."/>
            <person name="Weidman J.F."/>
            <person name="Fujii C."/>
            <person name="Bowman C."/>
            <person name="Watthey L."/>
            <person name="Wallin E."/>
            <person name="Hayes W.S."/>
            <person name="Borodovsky M."/>
            <person name="Karp P.D."/>
            <person name="Smith H.O."/>
            <person name="Fraser C.M."/>
            <person name="Venter J.C."/>
        </authorList>
    </citation>
    <scope>NUCLEOTIDE SEQUENCE [LARGE SCALE GENOMIC DNA]</scope>
    <source>
        <strain>ATCC 700392 / 26695</strain>
    </source>
</reference>
<protein>
    <recommendedName>
        <fullName>NADP-specific glutamate dehydrogenase</fullName>
        <shortName>NADP-GDH</shortName>
        <ecNumber>1.4.1.4</ecNumber>
    </recommendedName>
</protein>
<comment type="function">
    <text evidence="1">Catalyzes the reversible oxidative deamination of glutamate to alpha-ketoglutarate and ammonia.</text>
</comment>
<comment type="catalytic activity">
    <reaction>
        <text>L-glutamate + NADP(+) + H2O = 2-oxoglutarate + NH4(+) + NADPH + H(+)</text>
        <dbReference type="Rhea" id="RHEA:11612"/>
        <dbReference type="ChEBI" id="CHEBI:15377"/>
        <dbReference type="ChEBI" id="CHEBI:15378"/>
        <dbReference type="ChEBI" id="CHEBI:16810"/>
        <dbReference type="ChEBI" id="CHEBI:28938"/>
        <dbReference type="ChEBI" id="CHEBI:29985"/>
        <dbReference type="ChEBI" id="CHEBI:57783"/>
        <dbReference type="ChEBI" id="CHEBI:58349"/>
        <dbReference type="EC" id="1.4.1.4"/>
    </reaction>
</comment>
<comment type="subunit">
    <text evidence="1">Homohexamer.</text>
</comment>
<comment type="similarity">
    <text evidence="3">Belongs to the Glu/Leu/Phe/Val dehydrogenases family.</text>
</comment>
<keyword id="KW-0521">NADP</keyword>
<keyword id="KW-0560">Oxidoreductase</keyword>
<keyword id="KW-1185">Reference proteome</keyword>
<sequence>MYVEKILQSLQKKYPYQKEFHQAVYEAITSLKPLLDSDKSYEKHAILERLIEPEREIFFRVCWLDDNNQIQVNRGCRVEFNSAIGPYKGGLRFHPSVNESVIKFLGFEQVLKNSLTTLAMGGAKGGSDFDPKGKSEHEIMRFCQAFMNELYRHIGATTDVPAGDIGVGEREIGYLFGQYKKLVNRFEGVLTGKGLTYGGSLCRKEATGYGCVYFAEEMLQERNSSLEGKVCSVSGSGNVAIYTIEKLLQIGAKPVTASDSNGMIYDKDGIDLELLKEIKEVRRGRIKEYALEKKSAEYTPTENYPKGGNAVWHVPCFAAFPSATENELSVLDAKTLLSNGCKCVAEGANMPSSNEAIGLFLQAKISYGIGKAANAGGVSVSGLEMAQNASMHPWSFEVVDAKLHHIMKEIYKNVSQTAKEFKDPTNFVLGANIAGFRKVASAMIAQGV</sequence>
<name>DHE4_HELPY</name>
<evidence type="ECO:0000250" key="1"/>
<evidence type="ECO:0000255" key="2">
    <source>
        <dbReference type="PROSITE-ProRule" id="PRU10011"/>
    </source>
</evidence>
<evidence type="ECO:0000305" key="3"/>
<accession>P55990</accession>
<feature type="chain" id="PRO_0000182771" description="NADP-specific glutamate dehydrogenase">
    <location>
        <begin position="1"/>
        <end position="448"/>
    </location>
</feature>
<feature type="active site" description="Proton donor" evidence="2">
    <location>
        <position position="124"/>
    </location>
</feature>
<feature type="binding site" evidence="1">
    <location>
        <position position="88"/>
    </location>
    <ligand>
        <name>substrate</name>
    </ligand>
</feature>
<feature type="binding site" evidence="1">
    <location>
        <position position="109"/>
    </location>
    <ligand>
        <name>substrate</name>
    </ligand>
</feature>
<feature type="binding site" evidence="1">
    <location>
        <position position="112"/>
    </location>
    <ligand>
        <name>substrate</name>
    </ligand>
</feature>
<feature type="binding site" evidence="1">
    <location>
        <position position="163"/>
    </location>
    <ligand>
        <name>substrate</name>
    </ligand>
</feature>
<feature type="binding site" evidence="1">
    <location>
        <position position="207"/>
    </location>
    <ligand>
        <name>NADP(+)</name>
        <dbReference type="ChEBI" id="CHEBI:58349"/>
    </ligand>
</feature>
<feature type="binding site" evidence="1">
    <location>
        <position position="238"/>
    </location>
    <ligand>
        <name>NADP(+)</name>
        <dbReference type="ChEBI" id="CHEBI:58349"/>
    </ligand>
</feature>
<feature type="binding site" evidence="1">
    <location>
        <position position="381"/>
    </location>
    <ligand>
        <name>substrate</name>
    </ligand>
</feature>
<feature type="site" description="Important for catalysis" evidence="1">
    <location>
        <position position="164"/>
    </location>
</feature>
<organism>
    <name type="scientific">Helicobacter pylori (strain ATCC 700392 / 26695)</name>
    <name type="common">Campylobacter pylori</name>
    <dbReference type="NCBI Taxonomy" id="85962"/>
    <lineage>
        <taxon>Bacteria</taxon>
        <taxon>Pseudomonadati</taxon>
        <taxon>Campylobacterota</taxon>
        <taxon>Epsilonproteobacteria</taxon>
        <taxon>Campylobacterales</taxon>
        <taxon>Helicobacteraceae</taxon>
        <taxon>Helicobacter</taxon>
    </lineage>
</organism>
<dbReference type="EC" id="1.4.1.4"/>
<dbReference type="EMBL" id="AE000511">
    <property type="protein sequence ID" value="AAD07448.1"/>
    <property type="molecule type" value="Genomic_DNA"/>
</dbReference>
<dbReference type="PIR" id="D64567">
    <property type="entry name" value="D64567"/>
</dbReference>
<dbReference type="RefSeq" id="NP_207178.1">
    <property type="nucleotide sequence ID" value="NC_000915.1"/>
</dbReference>
<dbReference type="RefSeq" id="WP_000289187.1">
    <property type="nucleotide sequence ID" value="NC_018939.1"/>
</dbReference>
<dbReference type="SMR" id="P55990"/>
<dbReference type="FunCoup" id="P55990">
    <property type="interactions" value="285"/>
</dbReference>
<dbReference type="STRING" id="85962.HP_0380"/>
<dbReference type="PaxDb" id="85962-C694_01930"/>
<dbReference type="EnsemblBacteria" id="AAD07448">
    <property type="protein sequence ID" value="AAD07448"/>
    <property type="gene ID" value="HP_0380"/>
</dbReference>
<dbReference type="KEGG" id="heo:C694_01930"/>
<dbReference type="KEGG" id="hpy:HP_0380"/>
<dbReference type="PATRIC" id="fig|85962.47.peg.403"/>
<dbReference type="eggNOG" id="COG0334">
    <property type="taxonomic scope" value="Bacteria"/>
</dbReference>
<dbReference type="InParanoid" id="P55990"/>
<dbReference type="OrthoDB" id="9803297at2"/>
<dbReference type="PhylomeDB" id="P55990"/>
<dbReference type="Proteomes" id="UP000000429">
    <property type="component" value="Chromosome"/>
</dbReference>
<dbReference type="GO" id="GO:0005737">
    <property type="term" value="C:cytoplasm"/>
    <property type="evidence" value="ECO:0000250"/>
    <property type="project" value="UniProtKB"/>
</dbReference>
<dbReference type="GO" id="GO:0005829">
    <property type="term" value="C:cytosol"/>
    <property type="evidence" value="ECO:0000318"/>
    <property type="project" value="GO_Central"/>
</dbReference>
<dbReference type="GO" id="GO:0004354">
    <property type="term" value="F:glutamate dehydrogenase (NADP+) activity"/>
    <property type="evidence" value="ECO:0000250"/>
    <property type="project" value="UniProtKB"/>
</dbReference>
<dbReference type="GO" id="GO:0006537">
    <property type="term" value="P:glutamate biosynthetic process"/>
    <property type="evidence" value="ECO:0000250"/>
    <property type="project" value="UniProtKB"/>
</dbReference>
<dbReference type="CDD" id="cd05313">
    <property type="entry name" value="NAD_bind_2_Glu_DH"/>
    <property type="match status" value="1"/>
</dbReference>
<dbReference type="FunFam" id="1.10.285.10:FF:000001">
    <property type="entry name" value="Glutamate dehydrogenase"/>
    <property type="match status" value="1"/>
</dbReference>
<dbReference type="FunFam" id="3.40.50.10860:FF:000002">
    <property type="entry name" value="Glutamate dehydrogenase"/>
    <property type="match status" value="1"/>
</dbReference>
<dbReference type="FunFam" id="3.40.50.720:FF:000030">
    <property type="entry name" value="Glutamate dehydrogenase"/>
    <property type="match status" value="1"/>
</dbReference>
<dbReference type="Gene3D" id="1.10.285.10">
    <property type="entry name" value="Glutamate Dehydrogenase, chain A, domain 3"/>
    <property type="match status" value="2"/>
</dbReference>
<dbReference type="Gene3D" id="3.40.50.10860">
    <property type="entry name" value="Leucine Dehydrogenase, chain A, domain 1"/>
    <property type="match status" value="1"/>
</dbReference>
<dbReference type="Gene3D" id="3.40.50.720">
    <property type="entry name" value="NAD(P)-binding Rossmann-like Domain"/>
    <property type="match status" value="1"/>
</dbReference>
<dbReference type="InterPro" id="IPR046346">
    <property type="entry name" value="Aminoacid_DH-like_N_sf"/>
</dbReference>
<dbReference type="InterPro" id="IPR006095">
    <property type="entry name" value="Glu/Leu/Phe/Val/Trp_DH"/>
</dbReference>
<dbReference type="InterPro" id="IPR006096">
    <property type="entry name" value="Glu/Leu/Phe/Val/Trp_DH_C"/>
</dbReference>
<dbReference type="InterPro" id="IPR006097">
    <property type="entry name" value="Glu/Leu/Phe/Val/Trp_DH_dimer"/>
</dbReference>
<dbReference type="InterPro" id="IPR033524">
    <property type="entry name" value="Glu/Leu/Phe/Val_DH_AS"/>
</dbReference>
<dbReference type="InterPro" id="IPR014362">
    <property type="entry name" value="Glu_DH"/>
</dbReference>
<dbReference type="InterPro" id="IPR050724">
    <property type="entry name" value="Glu_Leu_Phe_Val_DH"/>
</dbReference>
<dbReference type="InterPro" id="IPR036291">
    <property type="entry name" value="NAD(P)-bd_dom_sf"/>
</dbReference>
<dbReference type="InterPro" id="IPR033922">
    <property type="entry name" value="NAD_bind_Glu_DH"/>
</dbReference>
<dbReference type="NCBIfam" id="NF006929">
    <property type="entry name" value="PRK09414.1"/>
    <property type="match status" value="1"/>
</dbReference>
<dbReference type="PANTHER" id="PTHR43571">
    <property type="entry name" value="NADP-SPECIFIC GLUTAMATE DEHYDROGENASE 1-RELATED"/>
    <property type="match status" value="1"/>
</dbReference>
<dbReference type="PANTHER" id="PTHR43571:SF1">
    <property type="entry name" value="NADP-SPECIFIC GLUTAMATE DEHYDROGENASE 1-RELATED"/>
    <property type="match status" value="1"/>
</dbReference>
<dbReference type="Pfam" id="PF00208">
    <property type="entry name" value="ELFV_dehydrog"/>
    <property type="match status" value="1"/>
</dbReference>
<dbReference type="Pfam" id="PF02812">
    <property type="entry name" value="ELFV_dehydrog_N"/>
    <property type="match status" value="1"/>
</dbReference>
<dbReference type="PIRSF" id="PIRSF000185">
    <property type="entry name" value="Glu_DH"/>
    <property type="match status" value="1"/>
</dbReference>
<dbReference type="PRINTS" id="PR00082">
    <property type="entry name" value="GLFDHDRGNASE"/>
</dbReference>
<dbReference type="SMART" id="SM00839">
    <property type="entry name" value="ELFV_dehydrog"/>
    <property type="match status" value="1"/>
</dbReference>
<dbReference type="SUPFAM" id="SSF53223">
    <property type="entry name" value="Aminoacid dehydrogenase-like, N-terminal domain"/>
    <property type="match status" value="1"/>
</dbReference>
<dbReference type="SUPFAM" id="SSF51735">
    <property type="entry name" value="NAD(P)-binding Rossmann-fold domains"/>
    <property type="match status" value="1"/>
</dbReference>
<dbReference type="PROSITE" id="PS00074">
    <property type="entry name" value="GLFV_DEHYDROGENASE"/>
    <property type="match status" value="1"/>
</dbReference>
<gene>
    <name type="primary">gdhA</name>
    <name type="ordered locus">HP_0380</name>
</gene>
<proteinExistence type="inferred from homology"/>